<dbReference type="EC" id="2.7.1.21" evidence="1"/>
<dbReference type="EMBL" id="AE009441">
    <property type="protein sequence ID" value="AAL64203.1"/>
    <property type="molecule type" value="Genomic_DNA"/>
</dbReference>
<dbReference type="SMR" id="Q8ZV53"/>
<dbReference type="STRING" id="178306.PAE2453"/>
<dbReference type="EnsemblBacteria" id="AAL64203">
    <property type="protein sequence ID" value="AAL64203"/>
    <property type="gene ID" value="PAE2453"/>
</dbReference>
<dbReference type="KEGG" id="pai:PAE2453"/>
<dbReference type="PATRIC" id="fig|178306.9.peg.1827"/>
<dbReference type="eggNOG" id="arCOG04798">
    <property type="taxonomic scope" value="Archaea"/>
</dbReference>
<dbReference type="HOGENOM" id="CLU_064400_3_0_2"/>
<dbReference type="InParanoid" id="Q8ZV53"/>
<dbReference type="Proteomes" id="UP000002439">
    <property type="component" value="Chromosome"/>
</dbReference>
<dbReference type="GO" id="GO:0005737">
    <property type="term" value="C:cytoplasm"/>
    <property type="evidence" value="ECO:0007669"/>
    <property type="project" value="UniProtKB-SubCell"/>
</dbReference>
<dbReference type="GO" id="GO:0005524">
    <property type="term" value="F:ATP binding"/>
    <property type="evidence" value="ECO:0007669"/>
    <property type="project" value="UniProtKB-UniRule"/>
</dbReference>
<dbReference type="GO" id="GO:0004797">
    <property type="term" value="F:thymidine kinase activity"/>
    <property type="evidence" value="ECO:0000318"/>
    <property type="project" value="GO_Central"/>
</dbReference>
<dbReference type="GO" id="GO:0008270">
    <property type="term" value="F:zinc ion binding"/>
    <property type="evidence" value="ECO:0007669"/>
    <property type="project" value="UniProtKB-UniRule"/>
</dbReference>
<dbReference type="GO" id="GO:0071897">
    <property type="term" value="P:DNA biosynthetic process"/>
    <property type="evidence" value="ECO:0007669"/>
    <property type="project" value="UniProtKB-KW"/>
</dbReference>
<dbReference type="GO" id="GO:0046104">
    <property type="term" value="P:thymidine metabolic process"/>
    <property type="evidence" value="ECO:0000318"/>
    <property type="project" value="GO_Central"/>
</dbReference>
<dbReference type="Gene3D" id="3.30.60.20">
    <property type="match status" value="1"/>
</dbReference>
<dbReference type="Gene3D" id="3.40.50.300">
    <property type="entry name" value="P-loop containing nucleotide triphosphate hydrolases"/>
    <property type="match status" value="1"/>
</dbReference>
<dbReference type="HAMAP" id="MF_00124">
    <property type="entry name" value="Thymidine_kinase"/>
    <property type="match status" value="1"/>
</dbReference>
<dbReference type="InterPro" id="IPR027417">
    <property type="entry name" value="P-loop_NTPase"/>
</dbReference>
<dbReference type="InterPro" id="IPR001267">
    <property type="entry name" value="Thymidine_kinase"/>
</dbReference>
<dbReference type="InterPro" id="IPR020633">
    <property type="entry name" value="Thymidine_kinase_CS"/>
</dbReference>
<dbReference type="NCBIfam" id="NF003296">
    <property type="entry name" value="PRK04296.1-1"/>
    <property type="match status" value="1"/>
</dbReference>
<dbReference type="PANTHER" id="PTHR11441">
    <property type="entry name" value="THYMIDINE KINASE"/>
    <property type="match status" value="1"/>
</dbReference>
<dbReference type="PANTHER" id="PTHR11441:SF0">
    <property type="entry name" value="THYMIDINE KINASE, CYTOSOLIC"/>
    <property type="match status" value="1"/>
</dbReference>
<dbReference type="Pfam" id="PF00265">
    <property type="entry name" value="TK"/>
    <property type="match status" value="1"/>
</dbReference>
<dbReference type="PIRSF" id="PIRSF035805">
    <property type="entry name" value="TK_cell"/>
    <property type="match status" value="1"/>
</dbReference>
<dbReference type="SUPFAM" id="SSF57716">
    <property type="entry name" value="Glucocorticoid receptor-like (DNA-binding domain)"/>
    <property type="match status" value="1"/>
</dbReference>
<dbReference type="SUPFAM" id="SSF52540">
    <property type="entry name" value="P-loop containing nucleoside triphosphate hydrolases"/>
    <property type="match status" value="1"/>
</dbReference>
<dbReference type="PROSITE" id="PS00603">
    <property type="entry name" value="TK_CELLULAR_TYPE"/>
    <property type="match status" value="1"/>
</dbReference>
<proteinExistence type="inferred from homology"/>
<gene>
    <name evidence="1" type="primary">tdk</name>
    <name type="ordered locus">PAE2453</name>
</gene>
<accession>Q8ZV53</accession>
<reference key="1">
    <citation type="journal article" date="2002" name="Proc. Natl. Acad. Sci. U.S.A.">
        <title>Genome sequence of the hyperthermophilic crenarchaeon Pyrobaculum aerophilum.</title>
        <authorList>
            <person name="Fitz-Gibbon S.T."/>
            <person name="Ladner H."/>
            <person name="Kim U.-J."/>
            <person name="Stetter K.O."/>
            <person name="Simon M.I."/>
            <person name="Miller J.H."/>
        </authorList>
    </citation>
    <scope>NUCLEOTIDE SEQUENCE [LARGE SCALE GENOMIC DNA]</scope>
    <source>
        <strain>ATCC 51768 / DSM 7523 / JCM 9630 / CIP 104966 / NBRC 100827 / IM2</strain>
    </source>
</reference>
<keyword id="KW-0067">ATP-binding</keyword>
<keyword id="KW-0963">Cytoplasm</keyword>
<keyword id="KW-0237">DNA synthesis</keyword>
<keyword id="KW-0418">Kinase</keyword>
<keyword id="KW-0479">Metal-binding</keyword>
<keyword id="KW-0547">Nucleotide-binding</keyword>
<keyword id="KW-1185">Reference proteome</keyword>
<keyword id="KW-0808">Transferase</keyword>
<keyword id="KW-0862">Zinc</keyword>
<organism>
    <name type="scientific">Pyrobaculum aerophilum (strain ATCC 51768 / DSM 7523 / JCM 9630 / CIP 104966 / NBRC 100827 / IM2)</name>
    <dbReference type="NCBI Taxonomy" id="178306"/>
    <lineage>
        <taxon>Archaea</taxon>
        <taxon>Thermoproteota</taxon>
        <taxon>Thermoprotei</taxon>
        <taxon>Thermoproteales</taxon>
        <taxon>Thermoproteaceae</taxon>
        <taxon>Pyrobaculum</taxon>
    </lineage>
</organism>
<feature type="chain" id="PRO_0000175055" description="Thymidine kinase">
    <location>
        <begin position="1"/>
        <end position="185"/>
    </location>
</feature>
<feature type="active site" description="Proton acceptor" evidence="1">
    <location>
        <position position="84"/>
    </location>
</feature>
<feature type="binding site" evidence="1">
    <location>
        <begin position="7"/>
        <end position="14"/>
    </location>
    <ligand>
        <name>ATP</name>
        <dbReference type="ChEBI" id="CHEBI:30616"/>
    </ligand>
</feature>
<feature type="binding site" evidence="1">
    <location>
        <begin position="83"/>
        <end position="86"/>
    </location>
    <ligand>
        <name>ATP</name>
        <dbReference type="ChEBI" id="CHEBI:30616"/>
    </ligand>
</feature>
<feature type="binding site" evidence="1">
    <location>
        <position position="139"/>
    </location>
    <ligand>
        <name>Zn(2+)</name>
        <dbReference type="ChEBI" id="CHEBI:29105"/>
    </ligand>
</feature>
<feature type="binding site" evidence="1">
    <location>
        <position position="142"/>
    </location>
    <ligand>
        <name>Zn(2+)</name>
        <dbReference type="ChEBI" id="CHEBI:29105"/>
    </ligand>
</feature>
<feature type="binding site" evidence="1">
    <location>
        <position position="177"/>
    </location>
    <ligand>
        <name>Zn(2+)</name>
        <dbReference type="ChEBI" id="CHEBI:29105"/>
    </ligand>
</feature>
<feature type="binding site" evidence="1">
    <location>
        <position position="180"/>
    </location>
    <ligand>
        <name>Zn(2+)</name>
        <dbReference type="ChEBI" id="CHEBI:29105"/>
    </ligand>
</feature>
<evidence type="ECO:0000255" key="1">
    <source>
        <dbReference type="HAMAP-Rule" id="MF_00124"/>
    </source>
</evidence>
<name>KITH_PYRAE</name>
<protein>
    <recommendedName>
        <fullName evidence="1">Thymidine kinase</fullName>
        <ecNumber evidence="1">2.7.1.21</ecNumber>
    </recommendedName>
</protein>
<comment type="catalytic activity">
    <reaction evidence="1">
        <text>thymidine + ATP = dTMP + ADP + H(+)</text>
        <dbReference type="Rhea" id="RHEA:19129"/>
        <dbReference type="ChEBI" id="CHEBI:15378"/>
        <dbReference type="ChEBI" id="CHEBI:17748"/>
        <dbReference type="ChEBI" id="CHEBI:30616"/>
        <dbReference type="ChEBI" id="CHEBI:63528"/>
        <dbReference type="ChEBI" id="CHEBI:456216"/>
        <dbReference type="EC" id="2.7.1.21"/>
    </reaction>
</comment>
<comment type="subunit">
    <text evidence="1">Homotetramer.</text>
</comment>
<comment type="subcellular location">
    <subcellularLocation>
        <location evidence="1">Cytoplasm</location>
    </subcellularLocation>
</comment>
<comment type="similarity">
    <text evidence="1">Belongs to the thymidine kinase family.</text>
</comment>
<sequence>MLVVIVGPMFAGKTTELIRRVERYVIAGRRAIVFKPSLDVRYDASKVAAHNGLKFDAFVIPPDKDGVEIIRKMGAEYDVVAVDEIQFFPVDLADALNQLANGRIVIAAGLNLDFRGEPFETTARAMAFADRVISLSAVCKLCGKPATRTQRLINGVPAPRHSPRILIGGNESYEARCRRHYVIPP</sequence>